<keyword id="KW-1017">Isopeptide bond</keyword>
<keyword id="KW-0479">Metal-binding</keyword>
<keyword id="KW-0539">Nucleus</keyword>
<keyword id="KW-1185">Reference proteome</keyword>
<keyword id="KW-0677">Repeat</keyword>
<keyword id="KW-0804">Transcription</keyword>
<keyword id="KW-0805">Transcription regulation</keyword>
<keyword id="KW-0832">Ubl conjugation</keyword>
<keyword id="KW-0862">Zinc</keyword>
<keyword id="KW-0863">Zinc-finger</keyword>
<reference key="1">
    <citation type="journal article" date="2011" name="Nat. Biotechnol.">
        <title>Genome sequencing and comparison of two nonhuman primate animal models, the cynomolgus and Chinese rhesus macaques.</title>
        <authorList>
            <person name="Yan G."/>
            <person name="Zhang G."/>
            <person name="Fang X."/>
            <person name="Zhang Y."/>
            <person name="Li C."/>
            <person name="Ling F."/>
            <person name="Cooper D.N."/>
            <person name="Li Q."/>
            <person name="Li Y."/>
            <person name="van Gool A.J."/>
            <person name="Du H."/>
            <person name="Chen J."/>
            <person name="Chen R."/>
            <person name="Zhang P."/>
            <person name="Huang Z."/>
            <person name="Thompson J.R."/>
            <person name="Meng Y."/>
            <person name="Bai Y."/>
            <person name="Wang J."/>
            <person name="Zhuo M."/>
            <person name="Wang T."/>
            <person name="Huang Y."/>
            <person name="Wei L."/>
            <person name="Li J."/>
            <person name="Wang Z."/>
            <person name="Hu H."/>
            <person name="Yang P."/>
            <person name="Le L."/>
            <person name="Stenson P.D."/>
            <person name="Li B."/>
            <person name="Liu X."/>
            <person name="Ball E.V."/>
            <person name="An N."/>
            <person name="Huang Q."/>
            <person name="Zhang Y."/>
            <person name="Fan W."/>
            <person name="Zhang X."/>
            <person name="Li Y."/>
            <person name="Wang W."/>
            <person name="Katze M.G."/>
            <person name="Su B."/>
            <person name="Nielsen R."/>
            <person name="Yang H."/>
            <person name="Wang J."/>
            <person name="Wang X."/>
            <person name="Wang J."/>
        </authorList>
    </citation>
    <scope>NUCLEOTIDE SEQUENCE [LARGE SCALE GENOMIC DNA]</scope>
</reference>
<reference key="2">
    <citation type="submission" date="2005-06" db="EMBL/GenBank/DDBJ databases">
        <title>DNA sequences of macaque genes expressed in brain or testis and its evolutionary implications.</title>
        <authorList>
            <consortium name="International consortium for macaque cDNA sequencing and analysis"/>
        </authorList>
    </citation>
    <scope>NUCLEOTIDE SEQUENCE [LARGE SCALE MRNA] OF 11-666</scope>
    <source>
        <tissue>Testis</tissue>
    </source>
</reference>
<protein>
    <recommendedName>
        <fullName>Zinc finger MYM-type protein 5</fullName>
    </recommendedName>
</protein>
<name>ZMYM5_MACFA</name>
<comment type="function">
    <text evidence="1">Functions as a transcriptional regulator.</text>
</comment>
<comment type="subunit">
    <text evidence="1">Interacts (via N-terminal 120 amino acid region) with ETV5 (via C-terminal).</text>
</comment>
<comment type="subcellular location">
    <subcellularLocation>
        <location evidence="3">Nucleus</location>
    </subcellularLocation>
</comment>
<comment type="sequence caution" evidence="3">
    <conflict type="erroneous initiation">
        <sequence resource="EMBL-CDS" id="BAE02381"/>
    </conflict>
    <text>Truncated N-terminus.</text>
</comment>
<accession>Q4R3D6</accession>
<accession>G7PVU4</accession>
<gene>
    <name type="primary">ZMYM5</name>
    <name type="ORF">QtsA-17725</name>
</gene>
<feature type="chain" id="PRO_0000343662" description="Zinc finger MYM-type protein 5">
    <location>
        <begin position="1"/>
        <end position="666"/>
    </location>
</feature>
<feature type="zinc finger region" description="MYM-type 1">
    <location>
        <begin position="262"/>
        <end position="296"/>
    </location>
</feature>
<feature type="zinc finger region" description="MYM-type 2">
    <location>
        <begin position="308"/>
        <end position="348"/>
    </location>
</feature>
<feature type="zinc finger region" description="MYM-type 3">
    <location>
        <begin position="355"/>
        <end position="390"/>
    </location>
</feature>
<feature type="zinc finger region" description="MYM-type 4">
    <location>
        <begin position="401"/>
        <end position="428"/>
    </location>
</feature>
<feature type="region of interest" description="Disordered" evidence="2">
    <location>
        <begin position="87"/>
        <end position="106"/>
    </location>
</feature>
<feature type="region of interest" description="Disordered" evidence="2">
    <location>
        <begin position="191"/>
        <end position="212"/>
    </location>
</feature>
<feature type="compositionally biased region" description="Polar residues" evidence="2">
    <location>
        <begin position="194"/>
        <end position="208"/>
    </location>
</feature>
<feature type="cross-link" description="Glycyl lysine isopeptide (Lys-Gly) (interchain with G-Cter in SUMO2)" evidence="1">
    <location>
        <position position="85"/>
    </location>
</feature>
<feature type="cross-link" description="Glycyl lysine isopeptide (Lys-Gly) (interchain with G-Cter in SUMO2)" evidence="1">
    <location>
        <position position="88"/>
    </location>
</feature>
<feature type="cross-link" description="Glycyl lysine isopeptide (Lys-Gly) (interchain with G-Cter in SUMO2)" evidence="1">
    <location>
        <position position="146"/>
    </location>
</feature>
<feature type="cross-link" description="Glycyl lysine isopeptide (Lys-Gly) (interchain with G-Cter in SUMO2)" evidence="1">
    <location>
        <position position="163"/>
    </location>
</feature>
<feature type="cross-link" description="Glycyl lysine isopeptide (Lys-Gly) (interchain with G-Cter in SUMO2)" evidence="1">
    <location>
        <position position="222"/>
    </location>
</feature>
<feature type="cross-link" description="Glycyl lysine isopeptide (Lys-Gly) (interchain with G-Cter in SUMO2)" evidence="1">
    <location>
        <position position="440"/>
    </location>
</feature>
<feature type="cross-link" description="Glycyl lysine isopeptide (Lys-Gly) (interchain with G-Cter in SUMO2)" evidence="1">
    <location>
        <position position="452"/>
    </location>
</feature>
<feature type="cross-link" description="Glycyl lysine isopeptide (Lys-Gly) (interchain with G-Cter in SUMO2)" evidence="1">
    <location>
        <position position="459"/>
    </location>
</feature>
<feature type="cross-link" description="Glycyl lysine isopeptide (Lys-Gly) (interchain with G-Cter in SUMO2)" evidence="1">
    <location>
        <position position="549"/>
    </location>
</feature>
<feature type="sequence conflict" description="In Ref. 2; BAE02381." evidence="3" ref="2">
    <original>V</original>
    <variation>A</variation>
    <location>
        <position position="43"/>
    </location>
</feature>
<feature type="sequence conflict" description="In Ref. 2; BAE02381." evidence="3" ref="2">
    <original>V</original>
    <variation>A</variation>
    <location>
        <position position="284"/>
    </location>
</feature>
<feature type="sequence conflict" description="In Ref. 2; BAE02381." evidence="3" ref="2">
    <original>F</original>
    <variation>D</variation>
    <location>
        <position position="289"/>
    </location>
</feature>
<feature type="sequence conflict" description="In Ref. 2; BAE02381." evidence="3" ref="2">
    <original>R</original>
    <variation>T</variation>
    <location>
        <position position="402"/>
    </location>
</feature>
<feature type="sequence conflict" description="In Ref. 2; BAE02381." evidence="3" ref="2">
    <original>N</original>
    <variation>D</variation>
    <location>
        <position position="482"/>
    </location>
</feature>
<dbReference type="EMBL" id="CM001292">
    <property type="protein sequence ID" value="EHH58467.1"/>
    <property type="molecule type" value="Genomic_DNA"/>
</dbReference>
<dbReference type="EMBL" id="AB179330">
    <property type="protein sequence ID" value="BAE02381.1"/>
    <property type="status" value="ALT_INIT"/>
    <property type="molecule type" value="mRNA"/>
</dbReference>
<dbReference type="RefSeq" id="NP_001306567.2">
    <property type="nucleotide sequence ID" value="NM_001319638.2"/>
</dbReference>
<dbReference type="SMR" id="Q4R3D6"/>
<dbReference type="GeneID" id="101867372"/>
<dbReference type="KEGG" id="mcf:101867372"/>
<dbReference type="CTD" id="9205"/>
<dbReference type="eggNOG" id="ENOG502S9U9">
    <property type="taxonomic scope" value="Eukaryota"/>
</dbReference>
<dbReference type="OrthoDB" id="7130at314294"/>
<dbReference type="Proteomes" id="UP000009130">
    <property type="component" value="Chromosome 17"/>
</dbReference>
<dbReference type="Proteomes" id="UP000233100">
    <property type="component" value="Unplaced"/>
</dbReference>
<dbReference type="GO" id="GO:0005634">
    <property type="term" value="C:nucleus"/>
    <property type="evidence" value="ECO:0007669"/>
    <property type="project" value="UniProtKB-SubCell"/>
</dbReference>
<dbReference type="GO" id="GO:0008270">
    <property type="term" value="F:zinc ion binding"/>
    <property type="evidence" value="ECO:0007669"/>
    <property type="project" value="UniProtKB-KW"/>
</dbReference>
<dbReference type="InterPro" id="IPR011017">
    <property type="entry name" value="TRASH_dom"/>
</dbReference>
<dbReference type="InterPro" id="IPR010507">
    <property type="entry name" value="Znf_MYM"/>
</dbReference>
<dbReference type="InterPro" id="IPR051284">
    <property type="entry name" value="ZnF_MYMT-QRICH1"/>
</dbReference>
<dbReference type="PANTHER" id="PTHR45736">
    <property type="entry name" value="ZINC FINGER MYM-TYPE PROTEIN"/>
    <property type="match status" value="1"/>
</dbReference>
<dbReference type="PANTHER" id="PTHR45736:SF7">
    <property type="entry name" value="ZINC FINGER MYM-TYPE PROTEIN 5"/>
    <property type="match status" value="1"/>
</dbReference>
<dbReference type="Pfam" id="PF06467">
    <property type="entry name" value="zf-FCS"/>
    <property type="match status" value="3"/>
</dbReference>
<dbReference type="SMART" id="SM00746">
    <property type="entry name" value="TRASH"/>
    <property type="match status" value="3"/>
</dbReference>
<dbReference type="SUPFAM" id="SSF57716">
    <property type="entry name" value="Glucocorticoid receptor-like (DNA-binding domain)"/>
    <property type="match status" value="1"/>
</dbReference>
<evidence type="ECO:0000250" key="1">
    <source>
        <dbReference type="UniProtKB" id="Q9UJ78"/>
    </source>
</evidence>
<evidence type="ECO:0000256" key="2">
    <source>
        <dbReference type="SAM" id="MobiDB-lite"/>
    </source>
</evidence>
<evidence type="ECO:0000305" key="3"/>
<proteinExistence type="evidence at transcript level"/>
<sequence length="666" mass="74318">MDKCSVGGLELTEQTPALLGNMAMATSLMDIGDSFGHPACPLVSRSRNSPVEDDDDVVFIESIQPPSVSAPAIADQRNFILASSKNEKPQGNYSVIPPPSRDLASQKGNISETIVIDDEEDIETNGGAEKNSSCFIEWGLPGTKNKTKDLDFSTSSLSRSKTKTGVRPFNPGRMNVAGDLFQNGEFATHHSPDSWISQSASFPRNQKQPGVDSLSPVALLRKQNFQPTAQQQLTNPAKITCANCKKPLQKGQTAYQRKGSAHLFCCTTCLSSFSHKRTQNTRSVICKKFASTKKADVVLPVESSRSFQEFCSTSCVSPCENNRNLKKGVFNKSRCTICSKLAEIRHEVSVNNVTHKLCSNHCFNKYRLANGLIMNCCEHCGEYMPSKSTGNNILVIGGQQKRFCCQSCINEYKQMMETKSKKLTASENRKRNAVREENEKQFCGLSSTLLKKIDGITEKKEKTSELHLSVECGTDTLLIKENVNLPPSSASAIADTFQEQLEEKNFEDSIVPVVLSADPGTWPRILNIKQRDTLVENVPPQVRNFNFPKDNTGRKFSETYYTRILPNGEKTTRSWLLYSTSKDSVFCLYCRLFGEGKNQLKNENGCKDWQHLSHILSKHEESEMHINNSVKYSKLKSDLKKNKAIDAAERRLYENEKNDGALLLYT</sequence>
<organism>
    <name type="scientific">Macaca fascicularis</name>
    <name type="common">Crab-eating macaque</name>
    <name type="synonym">Cynomolgus monkey</name>
    <dbReference type="NCBI Taxonomy" id="9541"/>
    <lineage>
        <taxon>Eukaryota</taxon>
        <taxon>Metazoa</taxon>
        <taxon>Chordata</taxon>
        <taxon>Craniata</taxon>
        <taxon>Vertebrata</taxon>
        <taxon>Euteleostomi</taxon>
        <taxon>Mammalia</taxon>
        <taxon>Eutheria</taxon>
        <taxon>Euarchontoglires</taxon>
        <taxon>Primates</taxon>
        <taxon>Haplorrhini</taxon>
        <taxon>Catarrhini</taxon>
        <taxon>Cercopithecidae</taxon>
        <taxon>Cercopithecinae</taxon>
        <taxon>Macaca</taxon>
    </lineage>
</organism>